<organism>
    <name type="scientific">Mycobacterium tuberculosis (strain ATCC 25618 / H37Rv)</name>
    <dbReference type="NCBI Taxonomy" id="83332"/>
    <lineage>
        <taxon>Bacteria</taxon>
        <taxon>Bacillati</taxon>
        <taxon>Actinomycetota</taxon>
        <taxon>Actinomycetes</taxon>
        <taxon>Mycobacteriales</taxon>
        <taxon>Mycobacteriaceae</taxon>
        <taxon>Mycobacterium</taxon>
        <taxon>Mycobacterium tuberculosis complex</taxon>
    </lineage>
</organism>
<feature type="chain" id="PRO_0000451443" description="[Acyl-carrier-protein] phosphodiesterase PptH">
    <location>
        <begin position="1"/>
        <end position="324"/>
    </location>
</feature>
<feature type="binding site" evidence="2">
    <location>
        <position position="22"/>
    </location>
    <ligand>
        <name>Mn(2+)</name>
        <dbReference type="ChEBI" id="CHEBI:29035"/>
    </ligand>
</feature>
<feature type="binding site" evidence="2">
    <location>
        <position position="24"/>
    </location>
    <ligand>
        <name>Mn(2+)</name>
        <dbReference type="ChEBI" id="CHEBI:29035"/>
    </ligand>
</feature>
<feature type="binding site" evidence="2">
    <location>
        <position position="51"/>
    </location>
    <ligand>
        <name>Fe cation</name>
        <dbReference type="ChEBI" id="CHEBI:24875"/>
    </ligand>
</feature>
<feature type="binding site" evidence="2">
    <location>
        <position position="51"/>
    </location>
    <ligand>
        <name>Mn(2+)</name>
        <dbReference type="ChEBI" id="CHEBI:29035"/>
    </ligand>
</feature>
<feature type="binding site" evidence="2">
    <location>
        <position position="79"/>
    </location>
    <ligand>
        <name>Fe cation</name>
        <dbReference type="ChEBI" id="CHEBI:24875"/>
    </ligand>
</feature>
<feature type="binding site" evidence="2">
    <location>
        <position position="205"/>
    </location>
    <ligand>
        <name>Fe cation</name>
        <dbReference type="ChEBI" id="CHEBI:24875"/>
    </ligand>
</feature>
<feature type="binding site" evidence="2">
    <location>
        <position position="246"/>
    </location>
    <ligand>
        <name>Fe cation</name>
        <dbReference type="ChEBI" id="CHEBI:24875"/>
    </ligand>
</feature>
<feature type="binding site" evidence="2">
    <location>
        <position position="248"/>
    </location>
    <ligand>
        <name>Mn(2+)</name>
        <dbReference type="ChEBI" id="CHEBI:29035"/>
    </ligand>
</feature>
<feature type="strand" evidence="7">
    <location>
        <begin position="17"/>
        <end position="21"/>
    </location>
</feature>
<feature type="helix" evidence="7">
    <location>
        <begin position="31"/>
        <end position="35"/>
    </location>
</feature>
<feature type="strand" evidence="7">
    <location>
        <begin position="45"/>
        <end position="50"/>
    </location>
</feature>
<feature type="helix" evidence="7">
    <location>
        <begin position="56"/>
        <end position="67"/>
    </location>
</feature>
<feature type="strand" evidence="7">
    <location>
        <begin position="70"/>
        <end position="76"/>
    </location>
</feature>
<feature type="turn" evidence="7">
    <location>
        <begin position="79"/>
        <end position="82"/>
    </location>
</feature>
<feature type="helix" evidence="7">
    <location>
        <begin position="94"/>
        <end position="108"/>
    </location>
</feature>
<feature type="strand" evidence="7">
    <location>
        <begin position="126"/>
        <end position="131"/>
    </location>
</feature>
<feature type="helix" evidence="7">
    <location>
        <begin position="148"/>
        <end position="157"/>
    </location>
</feature>
<feature type="helix" evidence="7">
    <location>
        <begin position="164"/>
        <end position="167"/>
    </location>
</feature>
<feature type="strand" evidence="7">
    <location>
        <begin position="173"/>
        <end position="175"/>
    </location>
</feature>
<feature type="helix" evidence="7">
    <location>
        <begin position="176"/>
        <end position="192"/>
    </location>
</feature>
<feature type="strand" evidence="7">
    <location>
        <begin position="200"/>
        <end position="203"/>
    </location>
</feature>
<feature type="strand" evidence="7">
    <location>
        <begin position="208"/>
        <end position="210"/>
    </location>
</feature>
<feature type="helix" evidence="7">
    <location>
        <begin position="211"/>
        <end position="215"/>
    </location>
</feature>
<feature type="strand" evidence="7">
    <location>
        <begin position="216"/>
        <end position="218"/>
    </location>
</feature>
<feature type="helix" evidence="7">
    <location>
        <begin position="219"/>
        <end position="224"/>
    </location>
</feature>
<feature type="helix" evidence="7">
    <location>
        <begin position="228"/>
        <end position="230"/>
    </location>
</feature>
<feature type="helix" evidence="7">
    <location>
        <begin position="233"/>
        <end position="236"/>
    </location>
</feature>
<feature type="strand" evidence="7">
    <location>
        <begin position="239"/>
        <end position="244"/>
    </location>
</feature>
<feature type="strand" evidence="7">
    <location>
        <begin position="251"/>
        <end position="255"/>
    </location>
</feature>
<feature type="strand" evidence="7">
    <location>
        <begin position="258"/>
        <end position="262"/>
    </location>
</feature>
<feature type="helix" evidence="7">
    <location>
        <begin position="268"/>
        <end position="271"/>
    </location>
</feature>
<feature type="strand" evidence="7">
    <location>
        <begin position="281"/>
        <end position="285"/>
    </location>
</feature>
<sequence>MTWKGSGQETVGAEPTLWAISDLHTGHLGNKPVAESLYPSSPDDWLIVAGDVAERTDEIRWSLDLLRRRFAKVIWVPGNHELWTTNRDPMQIFGRARYDYLVNMCDEMGVVTPEHPFPVWTERGGPATIVPMFLLYDYSFLPEGANSKAEGVAIAKERNVVATDEFLLSPEPYPTRDAWCHERVAATRARLEQLDWMQPTVLVNHFPLLRQPCDALFYPEFSLWCGTTKTADWHTRYNAVCSVYGHLHIPRTTWYDGVRFEEVSVGYPREWRRRKPYSWLRQVLPDPQYAPGYLNDFGGHFVITPEMRTQAAQFRERLRQRQSR</sequence>
<proteinExistence type="evidence at protein level"/>
<name>PPTH_MYCTU</name>
<evidence type="ECO:0000269" key="1">
    <source>
    </source>
</evidence>
<evidence type="ECO:0000269" key="2">
    <source>
    </source>
</evidence>
<evidence type="ECO:0000303" key="3">
    <source>
    </source>
</evidence>
<evidence type="ECO:0000305" key="4"/>
<evidence type="ECO:0000312" key="5">
    <source>
        <dbReference type="EMBL" id="CCP45594.1"/>
    </source>
</evidence>
<evidence type="ECO:0007744" key="6">
    <source>
        <dbReference type="PDB" id="6UNC"/>
    </source>
</evidence>
<evidence type="ECO:0007829" key="7">
    <source>
        <dbReference type="PDB" id="6UNC"/>
    </source>
</evidence>
<comment type="function">
    <text evidence="1">Catalyzes the hydrolysis of the phosphopantetheine group from substrate holo-carrier proteins.</text>
</comment>
<comment type="catalytic activity">
    <reaction evidence="1">
        <text>holo-[ACP] + H2O = apo-[ACP] + (R)-4'-phosphopantetheine + H(+)</text>
        <dbReference type="Rhea" id="RHEA:20537"/>
        <dbReference type="Rhea" id="RHEA-COMP:9685"/>
        <dbReference type="Rhea" id="RHEA-COMP:9690"/>
        <dbReference type="ChEBI" id="CHEBI:15377"/>
        <dbReference type="ChEBI" id="CHEBI:15378"/>
        <dbReference type="ChEBI" id="CHEBI:29999"/>
        <dbReference type="ChEBI" id="CHEBI:61723"/>
        <dbReference type="ChEBI" id="CHEBI:64479"/>
        <dbReference type="EC" id="3.1.4.14"/>
    </reaction>
</comment>
<comment type="cofactor">
    <cofactor evidence="2">
        <name>Fe(3+)</name>
        <dbReference type="ChEBI" id="CHEBI:29034"/>
    </cofactor>
</comment>
<comment type="cofactor">
    <cofactor evidence="2">
        <name>Mn(2+)</name>
        <dbReference type="ChEBI" id="CHEBI:29035"/>
    </cofactor>
</comment>
<comment type="disruption phenotype">
    <text evidence="1">Deletion mutant is highly and selectively resistant to the amidino-urea compound 1-[(2,6-diethylphenyl)-3-N-ethylcarbamimodoyl]urea (compound 8918).</text>
</comment>
<comment type="similarity">
    <text evidence="4">Belongs to the metallophosphoesterase superfamily.</text>
</comment>
<reference key="1">
    <citation type="journal article" date="1998" name="Nature">
        <title>Deciphering the biology of Mycobacterium tuberculosis from the complete genome sequence.</title>
        <authorList>
            <person name="Cole S.T."/>
            <person name="Brosch R."/>
            <person name="Parkhill J."/>
            <person name="Garnier T."/>
            <person name="Churcher C.M."/>
            <person name="Harris D.E."/>
            <person name="Gordon S.V."/>
            <person name="Eiglmeier K."/>
            <person name="Gas S."/>
            <person name="Barry C.E. III"/>
            <person name="Tekaia F."/>
            <person name="Badcock K."/>
            <person name="Basham D."/>
            <person name="Brown D."/>
            <person name="Chillingworth T."/>
            <person name="Connor R."/>
            <person name="Davies R.M."/>
            <person name="Devlin K."/>
            <person name="Feltwell T."/>
            <person name="Gentles S."/>
            <person name="Hamlin N."/>
            <person name="Holroyd S."/>
            <person name="Hornsby T."/>
            <person name="Jagels K."/>
            <person name="Krogh A."/>
            <person name="McLean J."/>
            <person name="Moule S."/>
            <person name="Murphy L.D."/>
            <person name="Oliver S."/>
            <person name="Osborne J."/>
            <person name="Quail M.A."/>
            <person name="Rajandream M.A."/>
            <person name="Rogers J."/>
            <person name="Rutter S."/>
            <person name="Seeger K."/>
            <person name="Skelton S."/>
            <person name="Squares S."/>
            <person name="Squares R."/>
            <person name="Sulston J.E."/>
            <person name="Taylor K."/>
            <person name="Whitehead S."/>
            <person name="Barrell B.G."/>
        </authorList>
    </citation>
    <scope>NUCLEOTIDE SEQUENCE [LARGE SCALE GENOMIC DNA]</scope>
    <source>
        <strain>ATCC 25618 / H37Rv</strain>
    </source>
</reference>
<reference key="2">
    <citation type="journal article" date="2011" name="Mol. Cell. Proteomics">
        <title>Proteogenomic analysis of Mycobacterium tuberculosis by high resolution mass spectrometry.</title>
        <authorList>
            <person name="Kelkar D.S."/>
            <person name="Kumar D."/>
            <person name="Kumar P."/>
            <person name="Balakrishnan L."/>
            <person name="Muthusamy B."/>
            <person name="Yadav A.K."/>
            <person name="Shrivastava P."/>
            <person name="Marimuthu A."/>
            <person name="Anand S."/>
            <person name="Sundaram H."/>
            <person name="Kingsbury R."/>
            <person name="Harsha H.C."/>
            <person name="Nair B."/>
            <person name="Prasad T.S."/>
            <person name="Chauhan D.S."/>
            <person name="Katoch K."/>
            <person name="Katoch V.M."/>
            <person name="Kumar P."/>
            <person name="Chaerkady R."/>
            <person name="Ramachandran S."/>
            <person name="Dash D."/>
            <person name="Pandey A."/>
        </authorList>
    </citation>
    <scope>IDENTIFICATION BY MASS SPECTROMETRY [LARGE SCALE ANALYSIS]</scope>
    <source>
        <strain>ATCC 25618 / H37Rv</strain>
    </source>
</reference>
<reference key="3">
    <citation type="journal article" date="2019" name="Science">
        <title>Opposing reactions in coenzyme A metabolism sensitize Mycobacterium tuberculosis to enzyme inhibition.</title>
        <authorList>
            <person name="Ballinger E."/>
            <person name="Mosior J."/>
            <person name="Hartman T."/>
            <person name="Burns-Huang K."/>
            <person name="Gold B."/>
            <person name="Morris R."/>
            <person name="Goullieux L."/>
            <person name="Blanc I."/>
            <person name="Vaubourgeix J."/>
            <person name="Lagrange S."/>
            <person name="Fraisse L."/>
            <person name="Sans S."/>
            <person name="Couturier C."/>
            <person name="Bacque E."/>
            <person name="Rhee K."/>
            <person name="Scarry S.M."/>
            <person name="Aube J."/>
            <person name="Yang G."/>
            <person name="Ouerfelli O."/>
            <person name="Schnappinger D."/>
            <person name="Ioerger T.R."/>
            <person name="Engelhart C.A."/>
            <person name="McConnell J.A."/>
            <person name="McAulay K."/>
            <person name="Fay A."/>
            <person name="Roubert C."/>
            <person name="Sacchettini J."/>
            <person name="Nathan C."/>
        </authorList>
    </citation>
    <scope>FUNCTION</scope>
    <scope>CATALYTIC ACTIVITY</scope>
    <scope>DISRUPTION PHENOTYPE</scope>
</reference>
<reference key="4">
    <citation type="journal article" date="2019" name="Science">
        <title>Opposing reactions in coenzyme A metabolism sensitize Mycobacterium tuberculosis to enzyme inhibition.</title>
        <authorList>
            <person name="Ballinger E."/>
            <person name="Mosior J."/>
            <person name="Hartman T."/>
            <person name="Burns-Huang K."/>
            <person name="Gold B."/>
            <person name="Morris R."/>
            <person name="Goullieux L."/>
            <person name="Blanc I."/>
            <person name="Vaubourgeix J."/>
            <person name="Lagrange S."/>
            <person name="Fraisse L."/>
            <person name="Sans S."/>
            <person name="Couturier C."/>
            <person name="Bacque E."/>
            <person name="Rhee K."/>
            <person name="Scarry S.M."/>
            <person name="Aube J."/>
            <person name="Yang G."/>
            <person name="Ouerfelli O."/>
            <person name="Schnappinger D."/>
            <person name="Ioerger T.R."/>
            <person name="Engelhart C.A."/>
            <person name="McConnell J.A."/>
            <person name="McAulay K."/>
            <person name="Fay A."/>
            <person name="Roubert C."/>
            <person name="Sacchettini J."/>
            <person name="Nathan C."/>
        </authorList>
    </citation>
    <scope>ERRATUM OF PUBMED:30705156</scope>
</reference>
<reference evidence="6" key="5">
    <citation type="journal article" date="2020" name="Protein Sci.">
        <title>Structural insights into phosphopantetheinyl hydrolase PptH from Mycobacterium tuberculosis.</title>
        <authorList>
            <person name="Mosior J."/>
            <person name="Bourland R."/>
            <person name="Soma S."/>
            <person name="Nathan C."/>
            <person name="Sacchettini J."/>
        </authorList>
    </citation>
    <scope>X-RAY CRYSTALLOGRAPHY (2.50 ANGSTROMS) OF 2-310 IN COMPLEX WITH IRON AND MANGANESE</scope>
    <scope>COFACTOR</scope>
</reference>
<protein>
    <recommendedName>
        <fullName evidence="4">[Acyl-carrier-protein] phosphodiesterase PptH</fullName>
        <shortName evidence="4">ACP phosphodiesterase PptH</shortName>
        <ecNumber evidence="1">3.1.4.14</ecNumber>
    </recommendedName>
    <alternativeName>
        <fullName evidence="3">Ppt hydrolase</fullName>
    </alternativeName>
</protein>
<keyword id="KW-0002">3D-structure</keyword>
<keyword id="KW-0378">Hydrolase</keyword>
<keyword id="KW-0408">Iron</keyword>
<keyword id="KW-0464">Manganese</keyword>
<keyword id="KW-0479">Metal-binding</keyword>
<keyword id="KW-1185">Reference proteome</keyword>
<dbReference type="EC" id="3.1.4.14" evidence="1"/>
<dbReference type="EMBL" id="AL123456">
    <property type="protein sequence ID" value="CCP45594.1"/>
    <property type="molecule type" value="Genomic_DNA"/>
</dbReference>
<dbReference type="RefSeq" id="NP_217311.1">
    <property type="nucleotide sequence ID" value="NC_000962.3"/>
</dbReference>
<dbReference type="RefSeq" id="WP_003414151.1">
    <property type="nucleotide sequence ID" value="NZ_NVQJ01000020.1"/>
</dbReference>
<dbReference type="PDB" id="6UNC">
    <property type="method" value="X-ray"/>
    <property type="resolution" value="2.50 A"/>
    <property type="chains" value="A/B/C/D=2-310"/>
</dbReference>
<dbReference type="PDBsum" id="6UNC"/>
<dbReference type="SMR" id="I6YEE1"/>
<dbReference type="STRING" id="83332.Rv2795c"/>
<dbReference type="PaxDb" id="83332-Rv2795c"/>
<dbReference type="DNASU" id="888492"/>
<dbReference type="GeneID" id="888492"/>
<dbReference type="KEGG" id="mtu:Rv2795c"/>
<dbReference type="KEGG" id="mtv:RVBD_2795c"/>
<dbReference type="PATRIC" id="fig|83332.111.peg.3108"/>
<dbReference type="TubercuList" id="Rv2795c"/>
<dbReference type="eggNOG" id="COG1409">
    <property type="taxonomic scope" value="Bacteria"/>
</dbReference>
<dbReference type="InParanoid" id="I6YEE1"/>
<dbReference type="OrthoDB" id="9013891at2"/>
<dbReference type="PhylomeDB" id="I6YEE1"/>
<dbReference type="Proteomes" id="UP000001584">
    <property type="component" value="Chromosome"/>
</dbReference>
<dbReference type="GO" id="GO:0008770">
    <property type="term" value="F:[acyl-carrier-protein] phosphodiesterase activity"/>
    <property type="evidence" value="ECO:0007669"/>
    <property type="project" value="UniProtKB-EC"/>
</dbReference>
<dbReference type="GO" id="GO:0046872">
    <property type="term" value="F:metal ion binding"/>
    <property type="evidence" value="ECO:0007669"/>
    <property type="project" value="UniProtKB-KW"/>
</dbReference>
<dbReference type="CDD" id="cd00838">
    <property type="entry name" value="MPP_superfamily"/>
    <property type="match status" value="1"/>
</dbReference>
<dbReference type="Gene3D" id="3.60.21.10">
    <property type="match status" value="1"/>
</dbReference>
<dbReference type="InterPro" id="IPR004843">
    <property type="entry name" value="Calcineurin-like_PHP_ApaH"/>
</dbReference>
<dbReference type="InterPro" id="IPR029052">
    <property type="entry name" value="Metallo-depent_PP-like"/>
</dbReference>
<dbReference type="InterPro" id="IPR052963">
    <property type="entry name" value="Pantetheine_PDE"/>
</dbReference>
<dbReference type="PANTHER" id="PTHR36492">
    <property type="match status" value="1"/>
</dbReference>
<dbReference type="PANTHER" id="PTHR36492:SF2">
    <property type="entry name" value="[ACYL-CARRIER-PROTEIN] PHOSPHODIESTERASE PPTH"/>
    <property type="match status" value="1"/>
</dbReference>
<dbReference type="Pfam" id="PF00149">
    <property type="entry name" value="Metallophos"/>
    <property type="match status" value="1"/>
</dbReference>
<dbReference type="SUPFAM" id="SSF56300">
    <property type="entry name" value="Metallo-dependent phosphatases"/>
    <property type="match status" value="1"/>
</dbReference>
<accession>I6YEE1</accession>
<gene>
    <name evidence="3" type="primary">pptH</name>
    <name evidence="5" type="ordered locus">Rv2795c</name>
</gene>